<name>END4_MYCBP</name>
<protein>
    <recommendedName>
        <fullName evidence="1">Probable endonuclease 4</fullName>
        <ecNumber evidence="1">3.1.21.2</ecNumber>
    </recommendedName>
    <alternativeName>
        <fullName evidence="1">Endodeoxyribonuclease IV</fullName>
    </alternativeName>
    <alternativeName>
        <fullName evidence="1">Endonuclease IV</fullName>
    </alternativeName>
</protein>
<comment type="function">
    <text evidence="1">Endonuclease IV plays a role in DNA repair. It cleaves phosphodiester bonds at apurinic or apyrimidinic (AP) sites, generating a 3'-hydroxyl group and a 5'-terminal sugar phosphate.</text>
</comment>
<comment type="catalytic activity">
    <reaction evidence="1">
        <text>Endonucleolytic cleavage to 5'-phosphooligonucleotide end-products.</text>
        <dbReference type="EC" id="3.1.21.2"/>
    </reaction>
</comment>
<comment type="cofactor">
    <cofactor evidence="1">
        <name>Zn(2+)</name>
        <dbReference type="ChEBI" id="CHEBI:29105"/>
    </cofactor>
    <text evidence="1">Binds 3 Zn(2+) ions.</text>
</comment>
<comment type="similarity">
    <text evidence="1">Belongs to the AP endonuclease 2 family.</text>
</comment>
<accession>A1KGF0</accession>
<reference key="1">
    <citation type="journal article" date="2007" name="Proc. Natl. Acad. Sci. U.S.A.">
        <title>Genome plasticity of BCG and impact on vaccine efficacy.</title>
        <authorList>
            <person name="Brosch R."/>
            <person name="Gordon S.V."/>
            <person name="Garnier T."/>
            <person name="Eiglmeier K."/>
            <person name="Frigui W."/>
            <person name="Valenti P."/>
            <person name="Dos Santos S."/>
            <person name="Duthoy S."/>
            <person name="Lacroix C."/>
            <person name="Garcia-Pelayo C."/>
            <person name="Inwald J.K."/>
            <person name="Golby P."/>
            <person name="Garcia J.N."/>
            <person name="Hewinson R.G."/>
            <person name="Behr M.A."/>
            <person name="Quail M.A."/>
            <person name="Churcher C."/>
            <person name="Barrell B.G."/>
            <person name="Parkhill J."/>
            <person name="Cole S.T."/>
        </authorList>
    </citation>
    <scope>NUCLEOTIDE SEQUENCE [LARGE SCALE GENOMIC DNA]</scope>
    <source>
        <strain>BCG / Pasteur 1173P2</strain>
    </source>
</reference>
<sequence>MLIGSHVSPTDPLAAAEAEGADVVQIFLGNPQSWKAPKPRDDAAALKAATLPIYVHAPYLINLASANNRVRIPSRKILQETCAAAADIGAAAVIVHGGHVADDNDIDKGFQRWRKALDRLETEVPVYLENTAGGDHAMARRFDTIARLWDVIGDTGIGFCLDTCHTWAAGEALTDAVDRIKAITGRIDLVHCNDSRDEAGSGRDRHANLGSGQIDPDLLVAAVKAAGAPVICETADQGRKDDIAFLRERTGS</sequence>
<organism>
    <name type="scientific">Mycobacterium bovis (strain BCG / Pasteur 1173P2)</name>
    <dbReference type="NCBI Taxonomy" id="410289"/>
    <lineage>
        <taxon>Bacteria</taxon>
        <taxon>Bacillati</taxon>
        <taxon>Actinomycetota</taxon>
        <taxon>Actinomycetes</taxon>
        <taxon>Mycobacteriales</taxon>
        <taxon>Mycobacteriaceae</taxon>
        <taxon>Mycobacterium</taxon>
        <taxon>Mycobacterium tuberculosis complex</taxon>
    </lineage>
</organism>
<dbReference type="EC" id="3.1.21.2" evidence="1"/>
<dbReference type="EMBL" id="AM408590">
    <property type="protein sequence ID" value="CAL70705.1"/>
    <property type="molecule type" value="Genomic_DNA"/>
</dbReference>
<dbReference type="RefSeq" id="WP_003403419.1">
    <property type="nucleotide sequence ID" value="NC_008769.1"/>
</dbReference>
<dbReference type="SMR" id="A1KGF0"/>
<dbReference type="KEGG" id="mbb:BCG_0719"/>
<dbReference type="HOGENOM" id="CLU_025885_0_2_11"/>
<dbReference type="Proteomes" id="UP000001472">
    <property type="component" value="Chromosome"/>
</dbReference>
<dbReference type="GO" id="GO:0008833">
    <property type="term" value="F:deoxyribonuclease IV (phage-T4-induced) activity"/>
    <property type="evidence" value="ECO:0007669"/>
    <property type="project" value="UniProtKB-UniRule"/>
</dbReference>
<dbReference type="GO" id="GO:0003677">
    <property type="term" value="F:DNA binding"/>
    <property type="evidence" value="ECO:0007669"/>
    <property type="project" value="InterPro"/>
</dbReference>
<dbReference type="GO" id="GO:0003906">
    <property type="term" value="F:DNA-(apurinic or apyrimidinic site) endonuclease activity"/>
    <property type="evidence" value="ECO:0007669"/>
    <property type="project" value="TreeGrafter"/>
</dbReference>
<dbReference type="GO" id="GO:0008081">
    <property type="term" value="F:phosphoric diester hydrolase activity"/>
    <property type="evidence" value="ECO:0007669"/>
    <property type="project" value="TreeGrafter"/>
</dbReference>
<dbReference type="GO" id="GO:0008270">
    <property type="term" value="F:zinc ion binding"/>
    <property type="evidence" value="ECO:0007669"/>
    <property type="project" value="UniProtKB-UniRule"/>
</dbReference>
<dbReference type="GO" id="GO:0006284">
    <property type="term" value="P:base-excision repair"/>
    <property type="evidence" value="ECO:0007669"/>
    <property type="project" value="TreeGrafter"/>
</dbReference>
<dbReference type="CDD" id="cd00019">
    <property type="entry name" value="AP2Ec"/>
    <property type="match status" value="1"/>
</dbReference>
<dbReference type="FunFam" id="3.20.20.150:FF:000019">
    <property type="entry name" value="Probable endonuclease 4"/>
    <property type="match status" value="1"/>
</dbReference>
<dbReference type="Gene3D" id="3.20.20.150">
    <property type="entry name" value="Divalent-metal-dependent TIM barrel enzymes"/>
    <property type="match status" value="1"/>
</dbReference>
<dbReference type="HAMAP" id="MF_00152">
    <property type="entry name" value="Nfo"/>
    <property type="match status" value="1"/>
</dbReference>
<dbReference type="InterPro" id="IPR001719">
    <property type="entry name" value="AP_endonuc_2"/>
</dbReference>
<dbReference type="InterPro" id="IPR018246">
    <property type="entry name" value="AP_endonuc_F2_Zn_BS"/>
</dbReference>
<dbReference type="InterPro" id="IPR036237">
    <property type="entry name" value="Xyl_isomerase-like_sf"/>
</dbReference>
<dbReference type="InterPro" id="IPR013022">
    <property type="entry name" value="Xyl_isomerase-like_TIM-brl"/>
</dbReference>
<dbReference type="NCBIfam" id="NF002198">
    <property type="entry name" value="PRK01060.1-3"/>
    <property type="match status" value="1"/>
</dbReference>
<dbReference type="PANTHER" id="PTHR21445:SF0">
    <property type="entry name" value="APURINIC-APYRIMIDINIC ENDONUCLEASE"/>
    <property type="match status" value="1"/>
</dbReference>
<dbReference type="PANTHER" id="PTHR21445">
    <property type="entry name" value="ENDONUCLEASE IV ENDODEOXYRIBONUCLEASE IV"/>
    <property type="match status" value="1"/>
</dbReference>
<dbReference type="Pfam" id="PF01261">
    <property type="entry name" value="AP_endonuc_2"/>
    <property type="match status" value="1"/>
</dbReference>
<dbReference type="SMART" id="SM00518">
    <property type="entry name" value="AP2Ec"/>
    <property type="match status" value="1"/>
</dbReference>
<dbReference type="SUPFAM" id="SSF51658">
    <property type="entry name" value="Xylose isomerase-like"/>
    <property type="match status" value="1"/>
</dbReference>
<dbReference type="PROSITE" id="PS00729">
    <property type="entry name" value="AP_NUCLEASE_F2_1"/>
    <property type="match status" value="1"/>
</dbReference>
<dbReference type="PROSITE" id="PS00730">
    <property type="entry name" value="AP_NUCLEASE_F2_2"/>
    <property type="match status" value="1"/>
</dbReference>
<dbReference type="PROSITE" id="PS00731">
    <property type="entry name" value="AP_NUCLEASE_F2_3"/>
    <property type="match status" value="1"/>
</dbReference>
<dbReference type="PROSITE" id="PS51432">
    <property type="entry name" value="AP_NUCLEASE_F2_4"/>
    <property type="match status" value="1"/>
</dbReference>
<proteinExistence type="inferred from homology"/>
<evidence type="ECO:0000255" key="1">
    <source>
        <dbReference type="HAMAP-Rule" id="MF_00152"/>
    </source>
</evidence>
<gene>
    <name evidence="1" type="primary">nfo</name>
    <name type="ordered locus">BCG_0719</name>
</gene>
<feature type="chain" id="PRO_1000011318" description="Probable endonuclease 4">
    <location>
        <begin position="1"/>
        <end position="252"/>
    </location>
</feature>
<feature type="binding site" evidence="1">
    <location>
        <position position="56"/>
    </location>
    <ligand>
        <name>Zn(2+)</name>
        <dbReference type="ChEBI" id="CHEBI:29105"/>
        <label>1</label>
    </ligand>
</feature>
<feature type="binding site" evidence="1">
    <location>
        <position position="96"/>
    </location>
    <ligand>
        <name>Zn(2+)</name>
        <dbReference type="ChEBI" id="CHEBI:29105"/>
        <label>1</label>
    </ligand>
</feature>
<feature type="binding site" evidence="1">
    <location>
        <position position="129"/>
    </location>
    <ligand>
        <name>Zn(2+)</name>
        <dbReference type="ChEBI" id="CHEBI:29105"/>
        <label>1</label>
    </ligand>
</feature>
<feature type="binding site" evidence="1">
    <location>
        <position position="129"/>
    </location>
    <ligand>
        <name>Zn(2+)</name>
        <dbReference type="ChEBI" id="CHEBI:29105"/>
        <label>2</label>
    </ligand>
</feature>
<feature type="binding site" evidence="1">
    <location>
        <position position="162"/>
    </location>
    <ligand>
        <name>Zn(2+)</name>
        <dbReference type="ChEBI" id="CHEBI:29105"/>
        <label>2</label>
    </ligand>
</feature>
<feature type="binding site" evidence="1">
    <location>
        <position position="165"/>
    </location>
    <ligand>
        <name>Zn(2+)</name>
        <dbReference type="ChEBI" id="CHEBI:29105"/>
        <label>3</label>
    </ligand>
</feature>
<feature type="binding site" evidence="1">
    <location>
        <position position="191"/>
    </location>
    <ligand>
        <name>Zn(2+)</name>
        <dbReference type="ChEBI" id="CHEBI:29105"/>
        <label>2</label>
    </ligand>
</feature>
<feature type="binding site" evidence="1">
    <location>
        <position position="204"/>
    </location>
    <ligand>
        <name>Zn(2+)</name>
        <dbReference type="ChEBI" id="CHEBI:29105"/>
        <label>3</label>
    </ligand>
</feature>
<feature type="binding site" evidence="1">
    <location>
        <position position="206"/>
    </location>
    <ligand>
        <name>Zn(2+)</name>
        <dbReference type="ChEBI" id="CHEBI:29105"/>
        <label>3</label>
    </ligand>
</feature>
<feature type="binding site" evidence="1">
    <location>
        <position position="233"/>
    </location>
    <ligand>
        <name>Zn(2+)</name>
        <dbReference type="ChEBI" id="CHEBI:29105"/>
        <label>2</label>
    </ligand>
</feature>
<keyword id="KW-0227">DNA damage</keyword>
<keyword id="KW-0234">DNA repair</keyword>
<keyword id="KW-0255">Endonuclease</keyword>
<keyword id="KW-0378">Hydrolase</keyword>
<keyword id="KW-0479">Metal-binding</keyword>
<keyword id="KW-0540">Nuclease</keyword>
<keyword id="KW-0862">Zinc</keyword>